<feature type="chain" id="PRO_0000181547" description="Large ribosomal subunit protein bL25">
    <location>
        <begin position="1"/>
        <end position="208"/>
    </location>
</feature>
<feature type="region of interest" description="Disordered" evidence="2">
    <location>
        <begin position="184"/>
        <end position="208"/>
    </location>
</feature>
<feature type="compositionally biased region" description="Low complexity" evidence="2">
    <location>
        <begin position="187"/>
        <end position="208"/>
    </location>
</feature>
<sequence length="208" mass="23004">MTDQTIVKMNAELRNSVGTGPSRTLRRNGAIPAVVYGKHRSPLSIYLSDREFLSKYRSAALSTHLIELEIGEKKEYVLMRDIQKHPVTDRIQHVDFQFIDHGTEIKIEVPLVFVNEQRCVGVKKGGVLNILHRTLHIKCLPNAILQSIEVDLANLTIGHSIHVSDLNLPSEVTVVMKEHNPTLVTISGTSSDQDTSGGESSGTTTSED</sequence>
<protein>
    <recommendedName>
        <fullName evidence="1">Large ribosomal subunit protein bL25</fullName>
    </recommendedName>
    <alternativeName>
        <fullName evidence="3">50S ribosomal protein L25</fullName>
    </alternativeName>
    <alternativeName>
        <fullName evidence="1">General stress protein CTC</fullName>
    </alternativeName>
</protein>
<evidence type="ECO:0000255" key="1">
    <source>
        <dbReference type="HAMAP-Rule" id="MF_01334"/>
    </source>
</evidence>
<evidence type="ECO:0000256" key="2">
    <source>
        <dbReference type="SAM" id="MobiDB-lite"/>
    </source>
</evidence>
<evidence type="ECO:0000305" key="3"/>
<organism>
    <name type="scientific">Ehrlichia ruminantium (strain Welgevonden)</name>
    <dbReference type="NCBI Taxonomy" id="254945"/>
    <lineage>
        <taxon>Bacteria</taxon>
        <taxon>Pseudomonadati</taxon>
        <taxon>Pseudomonadota</taxon>
        <taxon>Alphaproteobacteria</taxon>
        <taxon>Rickettsiales</taxon>
        <taxon>Anaplasmataceae</taxon>
        <taxon>Ehrlichia</taxon>
    </lineage>
</organism>
<proteinExistence type="inferred from homology"/>
<reference key="1">
    <citation type="journal article" date="2005" name="Proc. Natl. Acad. Sci. U.S.A.">
        <title>The genome of the heartwater agent Ehrlichia ruminantium contains multiple tandem repeats of actively variable copy number.</title>
        <authorList>
            <person name="Collins N.E."/>
            <person name="Liebenberg J."/>
            <person name="de Villiers E.P."/>
            <person name="Brayton K.A."/>
            <person name="Louw E."/>
            <person name="Pretorius A."/>
            <person name="Faber F.E."/>
            <person name="van Heerden H."/>
            <person name="Josemans A."/>
            <person name="van Kleef M."/>
            <person name="Steyn H.C."/>
            <person name="van Strijp M.F."/>
            <person name="Zweygarth E."/>
            <person name="Jongejan F."/>
            <person name="Maillard J.C."/>
            <person name="Berthier D."/>
            <person name="Botha M."/>
            <person name="Joubert F."/>
            <person name="Corton C.H."/>
            <person name="Thomson N.R."/>
            <person name="Allsopp M.T."/>
            <person name="Allsopp B.A."/>
        </authorList>
    </citation>
    <scope>NUCLEOTIDE SEQUENCE [LARGE SCALE GENOMIC DNA]</scope>
    <source>
        <strain>Welgevonden</strain>
    </source>
</reference>
<reference key="2">
    <citation type="journal article" date="2006" name="J. Bacteriol.">
        <title>Comparative genomic analysis of three strains of Ehrlichia ruminantium reveals an active process of genome size plasticity.</title>
        <authorList>
            <person name="Frutos R."/>
            <person name="Viari A."/>
            <person name="Ferraz C."/>
            <person name="Morgat A."/>
            <person name="Eychenie S."/>
            <person name="Kandassamy Y."/>
            <person name="Chantal I."/>
            <person name="Bensaid A."/>
            <person name="Coissac E."/>
            <person name="Vachiery N."/>
            <person name="Demaille J."/>
            <person name="Martinez D."/>
        </authorList>
    </citation>
    <scope>NUCLEOTIDE SEQUENCE [LARGE SCALE GENOMIC DNA]</scope>
    <source>
        <strain>Welgevonden</strain>
    </source>
</reference>
<dbReference type="EMBL" id="CR767821">
    <property type="protein sequence ID" value="CAH57807.1"/>
    <property type="molecule type" value="Genomic_DNA"/>
</dbReference>
<dbReference type="EMBL" id="CR925678">
    <property type="protein sequence ID" value="CAI26583.1"/>
    <property type="status" value="ALT_INIT"/>
    <property type="molecule type" value="Genomic_DNA"/>
</dbReference>
<dbReference type="RefSeq" id="WP_011154776.1">
    <property type="nucleotide sequence ID" value="NC_005295.2"/>
</dbReference>
<dbReference type="SMR" id="Q5HC84"/>
<dbReference type="GeneID" id="33057813"/>
<dbReference type="KEGG" id="eru:Erum0920"/>
<dbReference type="KEGG" id="erw:ERWE_CDS_00890"/>
<dbReference type="eggNOG" id="COG1825">
    <property type="taxonomic scope" value="Bacteria"/>
</dbReference>
<dbReference type="HOGENOM" id="CLU_075939_0_1_5"/>
<dbReference type="Proteomes" id="UP000001021">
    <property type="component" value="Chromosome"/>
</dbReference>
<dbReference type="GO" id="GO:0022625">
    <property type="term" value="C:cytosolic large ribosomal subunit"/>
    <property type="evidence" value="ECO:0007669"/>
    <property type="project" value="TreeGrafter"/>
</dbReference>
<dbReference type="GO" id="GO:0008097">
    <property type="term" value="F:5S rRNA binding"/>
    <property type="evidence" value="ECO:0007669"/>
    <property type="project" value="InterPro"/>
</dbReference>
<dbReference type="GO" id="GO:0003735">
    <property type="term" value="F:structural constituent of ribosome"/>
    <property type="evidence" value="ECO:0007669"/>
    <property type="project" value="InterPro"/>
</dbReference>
<dbReference type="GO" id="GO:0006412">
    <property type="term" value="P:translation"/>
    <property type="evidence" value="ECO:0007669"/>
    <property type="project" value="UniProtKB-UniRule"/>
</dbReference>
<dbReference type="CDD" id="cd00495">
    <property type="entry name" value="Ribosomal_L25_TL5_CTC"/>
    <property type="match status" value="1"/>
</dbReference>
<dbReference type="Gene3D" id="2.170.120.20">
    <property type="entry name" value="Ribosomal protein L25, beta domain"/>
    <property type="match status" value="1"/>
</dbReference>
<dbReference type="Gene3D" id="2.40.240.10">
    <property type="entry name" value="Ribosomal Protein L25, Chain P"/>
    <property type="match status" value="1"/>
</dbReference>
<dbReference type="HAMAP" id="MF_01334">
    <property type="entry name" value="Ribosomal_bL25_CTC"/>
    <property type="match status" value="1"/>
</dbReference>
<dbReference type="InterPro" id="IPR020056">
    <property type="entry name" value="Rbsml_bL25/Gln-tRNA_synth_N"/>
</dbReference>
<dbReference type="InterPro" id="IPR011035">
    <property type="entry name" value="Ribosomal_bL25/Gln-tRNA_synth"/>
</dbReference>
<dbReference type="InterPro" id="IPR020057">
    <property type="entry name" value="Ribosomal_bL25_b-dom"/>
</dbReference>
<dbReference type="InterPro" id="IPR037121">
    <property type="entry name" value="Ribosomal_bL25_C"/>
</dbReference>
<dbReference type="InterPro" id="IPR001021">
    <property type="entry name" value="Ribosomal_bL25_long"/>
</dbReference>
<dbReference type="InterPro" id="IPR029751">
    <property type="entry name" value="Ribosomal_L25_dom"/>
</dbReference>
<dbReference type="InterPro" id="IPR020930">
    <property type="entry name" value="Ribosomal_uL5_bac-type"/>
</dbReference>
<dbReference type="NCBIfam" id="TIGR00731">
    <property type="entry name" value="bL25_bact_ctc"/>
    <property type="match status" value="1"/>
</dbReference>
<dbReference type="NCBIfam" id="NF004128">
    <property type="entry name" value="PRK05618.1-2"/>
    <property type="match status" value="1"/>
</dbReference>
<dbReference type="NCBIfam" id="NF004612">
    <property type="entry name" value="PRK05943.1"/>
    <property type="match status" value="1"/>
</dbReference>
<dbReference type="PANTHER" id="PTHR33284">
    <property type="entry name" value="RIBOSOMAL PROTEIN L25/GLN-TRNA SYNTHETASE, ANTI-CODON-BINDING DOMAIN-CONTAINING PROTEIN"/>
    <property type="match status" value="1"/>
</dbReference>
<dbReference type="PANTHER" id="PTHR33284:SF1">
    <property type="entry name" value="RIBOSOMAL PROTEIN L25_GLN-TRNA SYNTHETASE, ANTI-CODON-BINDING DOMAIN-CONTAINING PROTEIN"/>
    <property type="match status" value="1"/>
</dbReference>
<dbReference type="Pfam" id="PF01386">
    <property type="entry name" value="Ribosomal_L25p"/>
    <property type="match status" value="1"/>
</dbReference>
<dbReference type="Pfam" id="PF14693">
    <property type="entry name" value="Ribosomal_TL5_C"/>
    <property type="match status" value="1"/>
</dbReference>
<dbReference type="SUPFAM" id="SSF50715">
    <property type="entry name" value="Ribosomal protein L25-like"/>
    <property type="match status" value="1"/>
</dbReference>
<name>RL25_EHRRW</name>
<gene>
    <name evidence="1" type="primary">rplY</name>
    <name evidence="1" type="synonym">ctc</name>
    <name type="ordered locus">Erum0920</name>
    <name type="ordered locus">ERWE_CDS_00890</name>
</gene>
<accession>Q5HC84</accession>
<accession>Q5FCM0</accession>
<keyword id="KW-0687">Ribonucleoprotein</keyword>
<keyword id="KW-0689">Ribosomal protein</keyword>
<keyword id="KW-0694">RNA-binding</keyword>
<keyword id="KW-0699">rRNA-binding</keyword>
<comment type="function">
    <text evidence="1">This is one of the proteins that binds to the 5S RNA in the ribosome where it forms part of the central protuberance.</text>
</comment>
<comment type="subunit">
    <text evidence="1">Part of the 50S ribosomal subunit; part of the 5S rRNA/L5/L18/L25 subcomplex. Contacts the 5S rRNA. Binds to the 5S rRNA independently of L5 and L18.</text>
</comment>
<comment type="similarity">
    <text evidence="1">Belongs to the bacterial ribosomal protein bL25 family. CTC subfamily.</text>
</comment>
<comment type="sequence caution" evidence="3">
    <conflict type="erroneous initiation">
        <sequence resource="EMBL-CDS" id="CAI26583"/>
    </conflict>
</comment>